<sequence>MNKNKESLHLSSPAINTHMNKRSQIWAAFRSAFPYTIPIFAGFLFLGIAYGIFMHSLGFSAIYPIIMSFMIFAGSMEFVAANFLLGAFNPMNALFLTLMVNARHLFYGISMLDKYRGTGKKKLYLIFGMCDESFSINYTANVPANVDKGWFMFFVTLLNHLYWVAGAAIGGIFGSYVKFNTEGLDFVMTALFIVIFIEQWMKEKKHYSALTGLGLSVASLILFGGNQFIIPAMLAILGVLTVLRKPLEKAEVSV</sequence>
<evidence type="ECO:0000255" key="1"/>
<evidence type="ECO:0000305" key="2"/>
<accession>O07942</accession>
<reference key="1">
    <citation type="journal article" date="1997" name="J. Bacteriol.">
        <title>An lrp-like gene of Bacillus subtilis involved in branched-chain amino acid transport.</title>
        <authorList>
            <person name="Belitsky B.R."/>
            <person name="Gustafsson M.C.U."/>
            <person name="Sonenshein A.L."/>
            <person name="von Wachenfeldt C."/>
        </authorList>
    </citation>
    <scope>NUCLEOTIDE SEQUENCE [GENOMIC DNA]</scope>
    <source>
        <strain>168 / BGSC1A1</strain>
    </source>
</reference>
<reference key="2">
    <citation type="journal article" date="1997" name="Microbiology">
        <title>Sequence of the Bacillus subtilis genome region in the vicinity of the lev operon reveals two new extracytoplasmic function RNA polymerase sigma factors SigV and SigZ.</title>
        <authorList>
            <person name="Sorokin A."/>
            <person name="Bolotin A."/>
            <person name="Purnelle B."/>
            <person name="Hilbert H."/>
            <person name="Lauber J."/>
            <person name="Duesterhoeft A."/>
            <person name="Ehrlich S.D."/>
        </authorList>
    </citation>
    <scope>NUCLEOTIDE SEQUENCE [GENOMIC DNA]</scope>
    <source>
        <strain>168</strain>
    </source>
</reference>
<reference key="3">
    <citation type="journal article" date="1997" name="Nature">
        <title>The complete genome sequence of the Gram-positive bacterium Bacillus subtilis.</title>
        <authorList>
            <person name="Kunst F."/>
            <person name="Ogasawara N."/>
            <person name="Moszer I."/>
            <person name="Albertini A.M."/>
            <person name="Alloni G."/>
            <person name="Azevedo V."/>
            <person name="Bertero M.G."/>
            <person name="Bessieres P."/>
            <person name="Bolotin A."/>
            <person name="Borchert S."/>
            <person name="Borriss R."/>
            <person name="Boursier L."/>
            <person name="Brans A."/>
            <person name="Braun M."/>
            <person name="Brignell S.C."/>
            <person name="Bron S."/>
            <person name="Brouillet S."/>
            <person name="Bruschi C.V."/>
            <person name="Caldwell B."/>
            <person name="Capuano V."/>
            <person name="Carter N.M."/>
            <person name="Choi S.-K."/>
            <person name="Codani J.-J."/>
            <person name="Connerton I.F."/>
            <person name="Cummings N.J."/>
            <person name="Daniel R.A."/>
            <person name="Denizot F."/>
            <person name="Devine K.M."/>
            <person name="Duesterhoeft A."/>
            <person name="Ehrlich S.D."/>
            <person name="Emmerson P.T."/>
            <person name="Entian K.-D."/>
            <person name="Errington J."/>
            <person name="Fabret C."/>
            <person name="Ferrari E."/>
            <person name="Foulger D."/>
            <person name="Fritz C."/>
            <person name="Fujita M."/>
            <person name="Fujita Y."/>
            <person name="Fuma S."/>
            <person name="Galizzi A."/>
            <person name="Galleron N."/>
            <person name="Ghim S.-Y."/>
            <person name="Glaser P."/>
            <person name="Goffeau A."/>
            <person name="Golightly E.J."/>
            <person name="Grandi G."/>
            <person name="Guiseppi G."/>
            <person name="Guy B.J."/>
            <person name="Haga K."/>
            <person name="Haiech J."/>
            <person name="Harwood C.R."/>
            <person name="Henaut A."/>
            <person name="Hilbert H."/>
            <person name="Holsappel S."/>
            <person name="Hosono S."/>
            <person name="Hullo M.-F."/>
            <person name="Itaya M."/>
            <person name="Jones L.-M."/>
            <person name="Joris B."/>
            <person name="Karamata D."/>
            <person name="Kasahara Y."/>
            <person name="Klaerr-Blanchard M."/>
            <person name="Klein C."/>
            <person name="Kobayashi Y."/>
            <person name="Koetter P."/>
            <person name="Koningstein G."/>
            <person name="Krogh S."/>
            <person name="Kumano M."/>
            <person name="Kurita K."/>
            <person name="Lapidus A."/>
            <person name="Lardinois S."/>
            <person name="Lauber J."/>
            <person name="Lazarevic V."/>
            <person name="Lee S.-M."/>
            <person name="Levine A."/>
            <person name="Liu H."/>
            <person name="Masuda S."/>
            <person name="Mauel C."/>
            <person name="Medigue C."/>
            <person name="Medina N."/>
            <person name="Mellado R.P."/>
            <person name="Mizuno M."/>
            <person name="Moestl D."/>
            <person name="Nakai S."/>
            <person name="Noback M."/>
            <person name="Noone D."/>
            <person name="O'Reilly M."/>
            <person name="Ogawa K."/>
            <person name="Ogiwara A."/>
            <person name="Oudega B."/>
            <person name="Park S.-H."/>
            <person name="Parro V."/>
            <person name="Pohl T.M."/>
            <person name="Portetelle D."/>
            <person name="Porwollik S."/>
            <person name="Prescott A.M."/>
            <person name="Presecan E."/>
            <person name="Pujic P."/>
            <person name="Purnelle B."/>
            <person name="Rapoport G."/>
            <person name="Rey M."/>
            <person name="Reynolds S."/>
            <person name="Rieger M."/>
            <person name="Rivolta C."/>
            <person name="Rocha E."/>
            <person name="Roche B."/>
            <person name="Rose M."/>
            <person name="Sadaie Y."/>
            <person name="Sato T."/>
            <person name="Scanlan E."/>
            <person name="Schleich S."/>
            <person name="Schroeter R."/>
            <person name="Scoffone F."/>
            <person name="Sekiguchi J."/>
            <person name="Sekowska A."/>
            <person name="Seror S.J."/>
            <person name="Serror P."/>
            <person name="Shin B.-S."/>
            <person name="Soldo B."/>
            <person name="Sorokin A."/>
            <person name="Tacconi E."/>
            <person name="Takagi T."/>
            <person name="Takahashi H."/>
            <person name="Takemaru K."/>
            <person name="Takeuchi M."/>
            <person name="Tamakoshi A."/>
            <person name="Tanaka T."/>
            <person name="Terpstra P."/>
            <person name="Tognoni A."/>
            <person name="Tosato V."/>
            <person name="Uchiyama S."/>
            <person name="Vandenbol M."/>
            <person name="Vannier F."/>
            <person name="Vassarotti A."/>
            <person name="Viari A."/>
            <person name="Wambutt R."/>
            <person name="Wedler E."/>
            <person name="Wedler H."/>
            <person name="Weitzenegger T."/>
            <person name="Winters P."/>
            <person name="Wipat A."/>
            <person name="Yamamoto H."/>
            <person name="Yamane K."/>
            <person name="Yasumoto K."/>
            <person name="Yata K."/>
            <person name="Yoshida K."/>
            <person name="Yoshikawa H.-F."/>
            <person name="Zumstein E."/>
            <person name="Yoshikawa H."/>
            <person name="Danchin A."/>
        </authorList>
    </citation>
    <scope>NUCLEOTIDE SEQUENCE [LARGE SCALE GENOMIC DNA]</scope>
    <source>
        <strain>168</strain>
    </source>
</reference>
<protein>
    <recommendedName>
        <fullName>Branched-chain amino acid transport protein AzlC</fullName>
    </recommendedName>
</protein>
<comment type="function">
    <text>Involved in branched-chain amino acid transport.</text>
</comment>
<comment type="subcellular location">
    <subcellularLocation>
        <location evidence="2">Cell membrane</location>
        <topology evidence="2">Multi-pass membrane protein</topology>
    </subcellularLocation>
</comment>
<comment type="similarity">
    <text evidence="2">Belongs to the AzlC family.</text>
</comment>
<organism>
    <name type="scientific">Bacillus subtilis (strain 168)</name>
    <dbReference type="NCBI Taxonomy" id="224308"/>
    <lineage>
        <taxon>Bacteria</taxon>
        <taxon>Bacillati</taxon>
        <taxon>Bacillota</taxon>
        <taxon>Bacilli</taxon>
        <taxon>Bacillales</taxon>
        <taxon>Bacillaceae</taxon>
        <taxon>Bacillus</taxon>
    </lineage>
</organism>
<proteinExistence type="inferred from homology"/>
<keyword id="KW-0029">Amino-acid transport</keyword>
<keyword id="KW-1003">Cell membrane</keyword>
<keyword id="KW-0472">Membrane</keyword>
<keyword id="KW-1185">Reference proteome</keyword>
<keyword id="KW-0812">Transmembrane</keyword>
<keyword id="KW-1133">Transmembrane helix</keyword>
<keyword id="KW-0813">Transport</keyword>
<gene>
    <name type="primary">azlC</name>
    <name type="synonym">yrdH</name>
    <name type="ordered locus">BSU26710</name>
</gene>
<dbReference type="EMBL" id="Y11043">
    <property type="protein sequence ID" value="CAA71940.1"/>
    <property type="molecule type" value="Genomic_DNA"/>
</dbReference>
<dbReference type="EMBL" id="U93876">
    <property type="protein sequence ID" value="AAB80901.1"/>
    <property type="molecule type" value="Genomic_DNA"/>
</dbReference>
<dbReference type="EMBL" id="AL009126">
    <property type="protein sequence ID" value="CAB14612.1"/>
    <property type="molecule type" value="Genomic_DNA"/>
</dbReference>
<dbReference type="PIR" id="G69592">
    <property type="entry name" value="G69592"/>
</dbReference>
<dbReference type="RefSeq" id="NP_390548.1">
    <property type="nucleotide sequence ID" value="NC_000964.3"/>
</dbReference>
<dbReference type="RefSeq" id="WP_009969035.1">
    <property type="nucleotide sequence ID" value="NZ_OZ025638.1"/>
</dbReference>
<dbReference type="SMR" id="O07942"/>
<dbReference type="FunCoup" id="O07942">
    <property type="interactions" value="67"/>
</dbReference>
<dbReference type="STRING" id="224308.BSU26710"/>
<dbReference type="TCDB" id="2.A.78.1.1">
    <property type="family name" value="the branched chain amino acid exporter (liv-e) family"/>
</dbReference>
<dbReference type="PaxDb" id="224308-BSU26710"/>
<dbReference type="EnsemblBacteria" id="CAB14612">
    <property type="protein sequence ID" value="CAB14612"/>
    <property type="gene ID" value="BSU_26710"/>
</dbReference>
<dbReference type="GeneID" id="936606"/>
<dbReference type="KEGG" id="bsu:BSU26710"/>
<dbReference type="PATRIC" id="fig|224308.179.peg.2901"/>
<dbReference type="eggNOG" id="COG1296">
    <property type="taxonomic scope" value="Bacteria"/>
</dbReference>
<dbReference type="InParanoid" id="O07942"/>
<dbReference type="OrthoDB" id="3181706at2"/>
<dbReference type="PhylomeDB" id="O07942"/>
<dbReference type="BioCyc" id="BSUB:BSU26710-MONOMER"/>
<dbReference type="Proteomes" id="UP000001570">
    <property type="component" value="Chromosome"/>
</dbReference>
<dbReference type="GO" id="GO:0005886">
    <property type="term" value="C:plasma membrane"/>
    <property type="evidence" value="ECO:0007669"/>
    <property type="project" value="UniProtKB-SubCell"/>
</dbReference>
<dbReference type="GO" id="GO:1903785">
    <property type="term" value="P:L-valine transmembrane transport"/>
    <property type="evidence" value="ECO:0000318"/>
    <property type="project" value="GO_Central"/>
</dbReference>
<dbReference type="InterPro" id="IPR004471">
    <property type="entry name" value="Brnchd-chn_aa_trnsp_AzlC"/>
</dbReference>
<dbReference type="InterPro" id="IPR011606">
    <property type="entry name" value="Brnchd-chn_aa_trnsp_permease"/>
</dbReference>
<dbReference type="NCBIfam" id="TIGR00346">
    <property type="entry name" value="azlC"/>
    <property type="match status" value="1"/>
</dbReference>
<dbReference type="PANTHER" id="PTHR34979">
    <property type="entry name" value="INNER MEMBRANE PROTEIN YGAZ"/>
    <property type="match status" value="1"/>
</dbReference>
<dbReference type="PANTHER" id="PTHR34979:SF1">
    <property type="entry name" value="INNER MEMBRANE PROTEIN YGAZ"/>
    <property type="match status" value="1"/>
</dbReference>
<dbReference type="Pfam" id="PF03591">
    <property type="entry name" value="AzlC"/>
    <property type="match status" value="1"/>
</dbReference>
<name>AZLC_BACSU</name>
<feature type="chain" id="PRO_0000111780" description="Branched-chain amino acid transport protein AzlC">
    <location>
        <begin position="1"/>
        <end position="254"/>
    </location>
</feature>
<feature type="transmembrane region" description="Helical" evidence="1">
    <location>
        <begin position="33"/>
        <end position="53"/>
    </location>
</feature>
<feature type="transmembrane region" description="Helical" evidence="1">
    <location>
        <begin position="65"/>
        <end position="85"/>
    </location>
</feature>
<feature type="transmembrane region" description="Helical" evidence="1">
    <location>
        <begin position="153"/>
        <end position="173"/>
    </location>
</feature>
<feature type="transmembrane region" description="Helical" evidence="1">
    <location>
        <begin position="177"/>
        <end position="197"/>
    </location>
</feature>
<feature type="transmembrane region" description="Helical" evidence="1">
    <location>
        <begin position="220"/>
        <end position="240"/>
    </location>
</feature>